<name>SPIKE_BC279</name>
<feature type="signal peptide" evidence="1">
    <location>
        <begin position="1"/>
        <end position="13"/>
    </location>
</feature>
<feature type="chain" id="PRO_0000289926" description="Spike glycoprotein">
    <location>
        <begin position="14"/>
        <end position="1241"/>
    </location>
</feature>
<feature type="chain" id="PRO_0000444056" description="Spike protein S1" evidence="1">
    <location>
        <begin position="14"/>
        <end position="653"/>
    </location>
</feature>
<feature type="chain" id="PRO_0000289928" description="Spike protein S2" evidence="1">
    <location>
        <begin position="654"/>
        <end position="1241"/>
    </location>
</feature>
<feature type="chain" id="PRO_0000444057" description="Spike protein S2'" evidence="1">
    <location>
        <begin position="784"/>
        <end position="1241"/>
    </location>
</feature>
<feature type="topological domain" description="Extracellular" evidence="1">
    <location>
        <begin position="14"/>
        <end position="1181"/>
    </location>
</feature>
<feature type="transmembrane region" description="Helical" evidence="1">
    <location>
        <begin position="1182"/>
        <end position="1202"/>
    </location>
</feature>
<feature type="topological domain" description="Cytoplasmic" evidence="1">
    <location>
        <begin position="1203"/>
        <end position="1241"/>
    </location>
</feature>
<feature type="domain" description="BetaCoV S1-NTD" evidence="3">
    <location>
        <begin position="14"/>
        <end position="294"/>
    </location>
</feature>
<feature type="domain" description="BetaCoV S1-CTD" evidence="2">
    <location>
        <begin position="325"/>
        <end position="499"/>
    </location>
</feature>
<feature type="region of interest" description="Fusion peptide 1" evidence="1">
    <location>
        <begin position="784"/>
        <end position="805"/>
    </location>
</feature>
<feature type="region of interest" description="Fusion peptide 2" evidence="1">
    <location>
        <begin position="803"/>
        <end position="823"/>
    </location>
</feature>
<feature type="region of interest" description="Heptad repeat 1" evidence="1">
    <location>
        <begin position="888"/>
        <end position="938"/>
    </location>
</feature>
<feature type="region of interest" description="Heptad repeat 2" evidence="1">
    <location>
        <begin position="1131"/>
        <end position="1170"/>
    </location>
</feature>
<feature type="coiled-coil region" evidence="1">
    <location>
        <begin position="917"/>
        <end position="961"/>
    </location>
</feature>
<feature type="coiled-coil region" evidence="1">
    <location>
        <begin position="1143"/>
        <end position="1171"/>
    </location>
</feature>
<feature type="short sequence motif" description="KxHxx" evidence="1">
    <location>
        <begin position="1237"/>
        <end position="1241"/>
    </location>
</feature>
<feature type="site" description="Cleavage" evidence="1">
    <location>
        <begin position="653"/>
        <end position="654"/>
    </location>
</feature>
<feature type="site" description="Cleavage" evidence="1">
    <location>
        <begin position="783"/>
        <end position="784"/>
    </location>
</feature>
<feature type="glycosylation site" description="N-linked (GlcNAc...) asparagine; by host" evidence="1">
    <location>
        <position position="65"/>
    </location>
</feature>
<feature type="glycosylation site" description="N-linked (GlcNAc...) asparagine; by host" evidence="1">
    <location>
        <position position="115"/>
    </location>
</feature>
<feature type="glycosylation site" description="N-linked (GlcNAc...) asparagine; by host" evidence="1">
    <location>
        <position position="124"/>
    </location>
</feature>
<feature type="glycosylation site" description="N-linked (GlcNAc...) asparagine; by host" evidence="1">
    <location>
        <position position="125"/>
    </location>
</feature>
<feature type="glycosylation site" description="N-linked (GlcNAc...) asparagine; by host" evidence="1">
    <location>
        <position position="162"/>
    </location>
</feature>
<feature type="glycosylation site" description="N-linked (GlcNAc...) asparagine; by host" evidence="1">
    <location>
        <position position="231"/>
    </location>
</feature>
<feature type="glycosylation site" description="N-linked (GlcNAc...) asparagine; by host" evidence="1">
    <location>
        <position position="273"/>
    </location>
</feature>
<feature type="glycosylation site" description="N-linked (GlcNAc...) asparagine; by host" evidence="1">
    <location>
        <position position="298"/>
    </location>
</feature>
<feature type="glycosylation site" description="N-linked (GlcNAc...) asparagine; by host" evidence="1">
    <location>
        <position position="322"/>
    </location>
</feature>
<feature type="glycosylation site" description="N-linked (GlcNAc...) asparagine; by host" evidence="1">
    <location>
        <position position="334"/>
    </location>
</feature>
<feature type="glycosylation site" description="N-linked (GlcNAc...) asparagine; by host" evidence="1">
    <location>
        <position position="361"/>
    </location>
</feature>
<feature type="glycosylation site" description="N-linked (GlcNAc...) asparagine; by host" evidence="1">
    <location>
        <position position="575"/>
    </location>
</feature>
<feature type="glycosylation site" description="N-linked (GlcNAc...) asparagine; by host" evidence="1">
    <location>
        <position position="588"/>
    </location>
</feature>
<feature type="glycosylation site" description="N-linked (GlcNAc...) asparagine; by host" evidence="1">
    <location>
        <position position="629"/>
    </location>
</feature>
<feature type="glycosylation site" description="N-linked (GlcNAc...) asparagine; by host" evidence="1">
    <location>
        <position position="677"/>
    </location>
</feature>
<feature type="glycosylation site" description="N-linked (GlcNAc...) asparagine; by host" evidence="1">
    <location>
        <position position="685"/>
    </location>
</feature>
<feature type="glycosylation site" description="N-linked (GlcNAc...) asparagine; by host" evidence="1">
    <location>
        <position position="769"/>
    </location>
</feature>
<feature type="glycosylation site" description="N-linked (GlcNAc...) asparagine; by host" evidence="1">
    <location>
        <position position="1042"/>
    </location>
</feature>
<feature type="glycosylation site" description="N-linked (GlcNAc...) asparagine; by host" evidence="1">
    <location>
        <position position="1066"/>
    </location>
</feature>
<feature type="glycosylation site" description="N-linked (GlcNAc...) asparagine; by host" evidence="1">
    <location>
        <position position="1102"/>
    </location>
</feature>
<feature type="glycosylation site" description="N-linked (GlcNAc...) asparagine; by host" evidence="1">
    <location>
        <position position="1126"/>
    </location>
</feature>
<feature type="glycosylation site" description="N-linked (GlcNAc...) asparagine; by host" evidence="1">
    <location>
        <position position="1141"/>
    </location>
</feature>
<feature type="glycosylation site" description="N-linked (GlcNAc...) asparagine; by host" evidence="1">
    <location>
        <position position="1162"/>
    </location>
</feature>
<feature type="disulfide bond" evidence="3">
    <location>
        <begin position="19"/>
        <end position="139"/>
    </location>
</feature>
<feature type="disulfide bond" evidence="3">
    <location>
        <begin position="134"/>
        <end position="163"/>
    </location>
</feature>
<feature type="disulfide bond" evidence="3">
    <location>
        <begin position="282"/>
        <end position="292"/>
    </location>
</feature>
<feature type="disulfide bond" evidence="2">
    <location>
        <begin position="327"/>
        <end position="352"/>
    </location>
</feature>
<feature type="disulfide bond" evidence="2">
    <location>
        <begin position="370"/>
        <end position="423"/>
    </location>
</feature>
<feature type="disulfide bond" evidence="2">
    <location>
        <begin position="382"/>
        <end position="497"/>
    </location>
</feature>
<feature type="disulfide bond" evidence="1">
    <location>
        <begin position="808"/>
        <end position="819"/>
    </location>
</feature>
<sequence>MKVLIFALLFSLAKAQEGCGIISRKPQPKMEKVSSSRRGVYYNDDIFRSDVLHLTQDYFLPFDSNLTQYFSLNIDSNKYTYFDNPILDFGDGVYFAATEKSNVIRGWIFGSSFDNTTQSAIIVNNSTHIIIRVCNFNLCKEPMYTVSKGTQQSSWVYQSAFNCTYDRVEKSFQLDTAPKTGNFKDLREYVFKNRDGFLSVYQTYTAVNLPRGFPAGFSVLRPILKLPFGINITSYRVVMTMFSQFNSNFLPESAAYYVGNLKYTTFMLSFNENGTITDAVDCSQNPLAELKCTIKNFNVSKGIYQTSNFRVTPTQEVVRFPNITNRCPFDKVFNASRFPNVYAWERTKISDCVADYTVLYNSTSFSTFKCYGVSPSKLIDLCFTSVYADTFLIRSSEVRQVAPGETGVIADYNYKLPDDFTGCVIAWNTAQQDQGQYYYRSYRKEKLKPFERDLSSDENGVYTLSTYDFYPSIPVEYQATRVVVLSFELLNAPATVCGPKLSTQLVKNQCVNFNFNGLRGTGVLTTSSKRFQSFQQFGRDTSDFTDSVRDPQTLEILDISPCSFGGVSVITPGTNASSEVAVLYQDVNCTDVPTSIHADQLTPAWRVYSTGVNVFQTQAGCLIGAEHVNASYECDIPIGAGICASYHTASVLRSTGQKSIVAYTMSLGAENSIAYANNSIAIPTNFSISVTTEVMPVSIAKTSVDCTMYICGDSLECSNLLLQYGSFCTQLNRALTGIAIEQDKNTQEVFAQVKQMYKTPAIKDFGGFNFSQILPDPSKPTKRSFIEDLLFNKVTLADAGFMKQYGECLGDISARDLICAQKFNGLTVLPPLLTDEMIAAYTAALVSGTATAGWTFGAGSALQIPFAMQMAYRFNGIGVTQNVLYENQKQIANQFNKAISQIQESLTTTSTALGKLQDVVNDNAQALNTLVKQLSSNFGAISSVLNDILSRLDKVEAEVQIDRLITGRLQSLQTYVTQQLIRAAEIRASANLAATKMSECVLGQSKRVDFCGKGYHLMSFPQAAPHGVVFLHVTYVPSQERNFTTAPAICHEGKAYFPREGVFVSNGTSWFITQRNFYSPQIITTDNTFVAGNCDVVIGIINNTVYDPLQPELDSFKEELDKYFKNHTSPDVDLGDISGINASVVNIQKEIDRLNEVAKNLNESLIDLQELGKYEQYIKWPWYVWLGFIAGLIAIVMVTILLCCMTSCCSCLKGACSCGSCCKFDEDDSEPVLKGVKLHYT</sequence>
<proteinExistence type="inferred from homology"/>
<protein>
    <recommendedName>
        <fullName evidence="1">Spike glycoprotein</fullName>
        <shortName evidence="1">S glycoprotein</shortName>
    </recommendedName>
    <alternativeName>
        <fullName evidence="1">E2</fullName>
    </alternativeName>
    <alternativeName>
        <fullName evidence="1">Peplomer protein</fullName>
    </alternativeName>
    <component>
        <recommendedName>
            <fullName evidence="1">Spike protein S1</fullName>
        </recommendedName>
    </component>
    <component>
        <recommendedName>
            <fullName evidence="1">Spike protein S2</fullName>
        </recommendedName>
    </component>
    <component>
        <recommendedName>
            <fullName evidence="1">Spike protein S2'</fullName>
        </recommendedName>
    </component>
</protein>
<gene>
    <name evidence="1" type="primary">S</name>
    <name type="ORF">2</name>
</gene>
<dbReference type="EMBL" id="DQ648857">
    <property type="protein sequence ID" value="ABG47069.1"/>
    <property type="molecule type" value="Genomic_RNA"/>
</dbReference>
<dbReference type="BMRB" id="Q0Q475"/>
<dbReference type="SMR" id="Q0Q475"/>
<dbReference type="GlyCosmos" id="Q0Q475">
    <property type="glycosylation" value="23 sites, No reported glycans"/>
</dbReference>
<dbReference type="Proteomes" id="UP000006573">
    <property type="component" value="Genome"/>
</dbReference>
<dbReference type="GO" id="GO:0044173">
    <property type="term" value="C:host cell endoplasmic reticulum-Golgi intermediate compartment membrane"/>
    <property type="evidence" value="ECO:0007669"/>
    <property type="project" value="UniProtKB-SubCell"/>
</dbReference>
<dbReference type="GO" id="GO:0020002">
    <property type="term" value="C:host cell plasma membrane"/>
    <property type="evidence" value="ECO:0007669"/>
    <property type="project" value="UniProtKB-SubCell"/>
</dbReference>
<dbReference type="GO" id="GO:0016020">
    <property type="term" value="C:membrane"/>
    <property type="evidence" value="ECO:0007669"/>
    <property type="project" value="UniProtKB-UniRule"/>
</dbReference>
<dbReference type="GO" id="GO:0019031">
    <property type="term" value="C:viral envelope"/>
    <property type="evidence" value="ECO:0007669"/>
    <property type="project" value="UniProtKB-UniRule"/>
</dbReference>
<dbReference type="GO" id="GO:0055036">
    <property type="term" value="C:virion membrane"/>
    <property type="evidence" value="ECO:0007669"/>
    <property type="project" value="UniProtKB-SubCell"/>
</dbReference>
<dbReference type="GO" id="GO:0075509">
    <property type="term" value="P:endocytosis involved in viral entry into host cell"/>
    <property type="evidence" value="ECO:0007669"/>
    <property type="project" value="UniProtKB-UniRule"/>
</dbReference>
<dbReference type="GO" id="GO:0039654">
    <property type="term" value="P:fusion of virus membrane with host endosome membrane"/>
    <property type="evidence" value="ECO:0007669"/>
    <property type="project" value="UniProtKB-UniRule"/>
</dbReference>
<dbReference type="GO" id="GO:0019064">
    <property type="term" value="P:fusion of virus membrane with host plasma membrane"/>
    <property type="evidence" value="ECO:0007669"/>
    <property type="project" value="UniProtKB-UniRule"/>
</dbReference>
<dbReference type="GO" id="GO:0046813">
    <property type="term" value="P:receptor-mediated virion attachment to host cell"/>
    <property type="evidence" value="ECO:0007669"/>
    <property type="project" value="UniProtKB-UniRule"/>
</dbReference>
<dbReference type="CDD" id="cd21624">
    <property type="entry name" value="SARS-CoV-like_Spike_S1_NTD"/>
    <property type="match status" value="1"/>
</dbReference>
<dbReference type="CDD" id="cd21477">
    <property type="entry name" value="SARS-CoV-like_Spike_S1_RBD"/>
    <property type="match status" value="1"/>
</dbReference>
<dbReference type="CDD" id="cd22378">
    <property type="entry name" value="SARS-CoV-like_Spike_SD1-2_S1-S2_S2"/>
    <property type="match status" value="1"/>
</dbReference>
<dbReference type="FunFam" id="1.20.5.300:FF:000003">
    <property type="entry name" value="Spike glycoprotein"/>
    <property type="match status" value="1"/>
</dbReference>
<dbReference type="Gene3D" id="1.20.5.300">
    <property type="match status" value="1"/>
</dbReference>
<dbReference type="Gene3D" id="3.30.70.1840">
    <property type="match status" value="2"/>
</dbReference>
<dbReference type="Gene3D" id="1.20.5.790">
    <property type="entry name" value="Single helix bin"/>
    <property type="match status" value="1"/>
</dbReference>
<dbReference type="Gene3D" id="2.60.120.960">
    <property type="entry name" value="Spike glycoprotein, N-terminal domain"/>
    <property type="match status" value="1"/>
</dbReference>
<dbReference type="HAMAP" id="MF_04099">
    <property type="entry name" value="BETA_CORONA_SPIKE"/>
    <property type="match status" value="1"/>
</dbReference>
<dbReference type="InterPro" id="IPR032500">
    <property type="entry name" value="bCoV_S1_N"/>
</dbReference>
<dbReference type="InterPro" id="IPR042578">
    <property type="entry name" value="BETA_CORONA_SPIKE"/>
</dbReference>
<dbReference type="InterPro" id="IPR043473">
    <property type="entry name" value="S2_sf_CoV"/>
</dbReference>
<dbReference type="InterPro" id="IPR043002">
    <property type="entry name" value="Spike_N_sf"/>
</dbReference>
<dbReference type="InterPro" id="IPR044341">
    <property type="entry name" value="Spike_S1_N_SARS-CoV-like"/>
</dbReference>
<dbReference type="InterPro" id="IPR018548">
    <property type="entry name" value="Spike_S1_RBD_bCoV"/>
</dbReference>
<dbReference type="InterPro" id="IPR036326">
    <property type="entry name" value="Spike_S1_RBD_sf_bCoV"/>
</dbReference>
<dbReference type="InterPro" id="IPR002552">
    <property type="entry name" value="Spike_S2_CoV"/>
</dbReference>
<dbReference type="InterPro" id="IPR044873">
    <property type="entry name" value="Spike_S2_CoV_HR1"/>
</dbReference>
<dbReference type="InterPro" id="IPR044874">
    <property type="entry name" value="Spike_S2_CoV_HR2"/>
</dbReference>
<dbReference type="Pfam" id="PF16451">
    <property type="entry name" value="bCoV_S1_N"/>
    <property type="match status" value="1"/>
</dbReference>
<dbReference type="Pfam" id="PF09408">
    <property type="entry name" value="bCoV_S1_RBD"/>
    <property type="match status" value="1"/>
</dbReference>
<dbReference type="Pfam" id="PF01601">
    <property type="entry name" value="CoV_S2"/>
    <property type="match status" value="1"/>
</dbReference>
<dbReference type="SUPFAM" id="SSF111474">
    <property type="entry name" value="Coronavirus S2 glycoprotein"/>
    <property type="match status" value="2"/>
</dbReference>
<dbReference type="SUPFAM" id="SSF143587">
    <property type="entry name" value="SARS receptor-binding domain-like"/>
    <property type="match status" value="1"/>
</dbReference>
<dbReference type="PROSITE" id="PS51921">
    <property type="entry name" value="BCOV_S1_CTD"/>
    <property type="match status" value="1"/>
</dbReference>
<dbReference type="PROSITE" id="PS51922">
    <property type="entry name" value="BCOV_S1_NTD"/>
    <property type="match status" value="1"/>
</dbReference>
<dbReference type="PROSITE" id="PS51923">
    <property type="entry name" value="COV_S2_HR1"/>
    <property type="match status" value="1"/>
</dbReference>
<dbReference type="PROSITE" id="PS51924">
    <property type="entry name" value="COV_S2_HR2"/>
    <property type="match status" value="1"/>
</dbReference>
<organism>
    <name type="scientific">Bat coronavirus 279/2005</name>
    <name type="common">BtCoV</name>
    <name type="synonym">BtCoV/279/2005</name>
    <dbReference type="NCBI Taxonomy" id="389167"/>
    <lineage>
        <taxon>Viruses</taxon>
        <taxon>Riboviria</taxon>
        <taxon>Orthornavirae</taxon>
        <taxon>Pisuviricota</taxon>
        <taxon>Pisoniviricetes</taxon>
        <taxon>Nidovirales</taxon>
        <taxon>Cornidovirineae</taxon>
        <taxon>Coronaviridae</taxon>
        <taxon>Orthocoronavirinae</taxon>
        <taxon>Betacoronavirus</taxon>
        <taxon>Sarbecovirus</taxon>
        <taxon>Severe acute respiratory syndrome coronavirus</taxon>
    </lineage>
</organism>
<keyword id="KW-0175">Coiled coil</keyword>
<keyword id="KW-1015">Disulfide bond</keyword>
<keyword id="KW-1170">Fusion of virus membrane with host endosomal membrane</keyword>
<keyword id="KW-1168">Fusion of virus membrane with host membrane</keyword>
<keyword id="KW-0325">Glycoprotein</keyword>
<keyword id="KW-1032">Host cell membrane</keyword>
<keyword id="KW-1043">Host membrane</keyword>
<keyword id="KW-0945">Host-virus interaction</keyword>
<keyword id="KW-0449">Lipoprotein</keyword>
<keyword id="KW-0472">Membrane</keyword>
<keyword id="KW-0564">Palmitate</keyword>
<keyword id="KW-0732">Signal</keyword>
<keyword id="KW-0812">Transmembrane</keyword>
<keyword id="KW-1133">Transmembrane helix</keyword>
<keyword id="KW-1161">Viral attachment to host cell</keyword>
<keyword id="KW-0261">Viral envelope protein</keyword>
<keyword id="KW-1162">Viral penetration into host cytoplasm</keyword>
<keyword id="KW-0946">Virion</keyword>
<keyword id="KW-0843">Virulence</keyword>
<keyword id="KW-1160">Virus entry into host cell</keyword>
<reference key="1">
    <citation type="journal article" date="2006" name="J. Virol.">
        <title>Prevalence and genetic diversity of coronaviruses in bats from China.</title>
        <authorList>
            <person name="Tang X.C."/>
            <person name="Zhang J.X."/>
            <person name="Zhang S.Y."/>
            <person name="Wang P."/>
            <person name="Fan X.H."/>
            <person name="Li L.F."/>
            <person name="Li G."/>
            <person name="Dong B.Q."/>
            <person name="Liu W."/>
            <person name="Cheung C.L."/>
            <person name="Xu K.M."/>
            <person name="Song W.J."/>
            <person name="Vijaykrishna D."/>
            <person name="Poon L.L.M."/>
            <person name="Peiris J.S.M."/>
            <person name="Smith G.J."/>
            <person name="Chen H."/>
            <person name="Guan Y."/>
        </authorList>
    </citation>
    <scope>NUCLEOTIDE SEQUENCE [GENOMIC RNA]</scope>
</reference>
<comment type="function">
    <molecule>Spike protein S1</molecule>
    <text evidence="1">Attaches the virion to the cell membrane by interacting with host receptor, initiating the infection.</text>
</comment>
<comment type="function">
    <molecule>Spike protein S2</molecule>
    <text evidence="1">Mediates fusion of the virion and cellular membranes by acting as a class I viral fusion protein. Under the current model, the protein has at least three conformational states: pre-fusion native state, pre-hairpin intermediate state, and post-fusion hairpin state. During viral and target cell membrane fusion, the coiled coil regions (heptad repeats) assume a trimer-of-hairpins structure, positioning the fusion peptide in close proximity to the C-terminal region of the ectodomain. The formation of this structure appears to drive apposition and subsequent fusion of viral and target cell membranes.</text>
</comment>
<comment type="function">
    <molecule>Spike protein S2'</molecule>
    <text evidence="1">Acts as a viral fusion peptide which is unmasked following S2 cleavage occurring upon virus endocytosis.</text>
</comment>
<comment type="subunit">
    <text evidence="1">Homotrimer; each monomer consists of a S1 and a S2 subunit. The resulting peplomers protrude from the virus surface as spikes.</text>
</comment>
<comment type="subcellular location">
    <subcellularLocation>
        <location evidence="1">Virion membrane</location>
        <topology evidence="1">Single-pass type I membrane protein</topology>
    </subcellularLocation>
    <subcellularLocation>
        <location evidence="1">Host endoplasmic reticulum-Golgi intermediate compartment membrane</location>
        <topology evidence="1">Single-pass type I membrane protein</topology>
    </subcellularLocation>
    <subcellularLocation>
        <location evidence="1">Host cell membrane</location>
        <topology evidence="1">Single-pass type I membrane protein</topology>
    </subcellularLocation>
    <text evidence="1">Accumulates in the endoplasmic reticulum-Golgi intermediate compartment, where it participates in virus particle assembly. Some S oligomers are transported to the host plasma membrane, where they may mediate cell-cell fusion.</text>
</comment>
<comment type="domain">
    <text evidence="1">Fusion peptide 1 (FP1) and fusion peptide 2 (FP2) function cooperatively and have a membrane-ordering effect on lipid headgroups and shallow hydrophobic regions of target bilayers. They are considered as two domains of an extended, bipartite FP. The membrane-ordering activity is calcium-dependent and also dependent on correct folding, which is maintained by an internal disulfide bond in FP2.</text>
</comment>
<comment type="PTM">
    <text evidence="1">Specific enzymatic cleavages in vivo yield mature proteins. The precursor is processed into S1 and S2 by host cell furin or another cellular protease to yield the mature S1 and S2 proteins. Additionally, a second cleavage leads to the release of a fusion peptide after viral attachment to host cell receptor.</text>
</comment>
<comment type="PTM">
    <text evidence="1">The cytoplasmic Cys-rich domain is palmitoylated. Spike glycoprotein is digested within host endosomes.</text>
</comment>
<comment type="miscellaneous">
    <text>Bat coronavirus 279/2005 is highly similar to SARS-CoV (SARS-like).</text>
</comment>
<comment type="similarity">
    <text evidence="1">Belongs to the betacoronaviruses spike protein family.</text>
</comment>
<evidence type="ECO:0000255" key="1">
    <source>
        <dbReference type="HAMAP-Rule" id="MF_04099"/>
    </source>
</evidence>
<evidence type="ECO:0000255" key="2">
    <source>
        <dbReference type="PROSITE-ProRule" id="PRU01269"/>
    </source>
</evidence>
<evidence type="ECO:0000255" key="3">
    <source>
        <dbReference type="PROSITE-ProRule" id="PRU01270"/>
    </source>
</evidence>
<organismHost>
    <name type="scientific">Rhinolophus macrotis</name>
    <name type="common">Big-eared horseshoe bat</name>
    <dbReference type="NCBI Taxonomy" id="196889"/>
</organismHost>
<accession>Q0Q475</accession>